<comment type="function">
    <text evidence="1">Could be involved in insertion of integral membrane proteins into the membrane.</text>
</comment>
<comment type="subcellular location">
    <subcellularLocation>
        <location evidence="1">Cell inner membrane</location>
        <topology evidence="1">Peripheral membrane protein</topology>
        <orientation evidence="1">Cytoplasmic side</orientation>
    </subcellularLocation>
</comment>
<comment type="similarity">
    <text evidence="1">Belongs to the UPF0161 family.</text>
</comment>
<proteinExistence type="inferred from homology"/>
<name>YIDD_ECOLU</name>
<protein>
    <recommendedName>
        <fullName evidence="1">Putative membrane protein insertion efficiency factor</fullName>
    </recommendedName>
</protein>
<keyword id="KW-0997">Cell inner membrane</keyword>
<keyword id="KW-1003">Cell membrane</keyword>
<keyword id="KW-0472">Membrane</keyword>
<sequence length="85" mass="9381">MAPPLSPGSRVLIALIRVYQRLISPLLGPHCRFTPTCSSYGIEALRRFGVIKGSWLTVKRVLKCHPLHPGGDDPVPPGPFDTREH</sequence>
<accession>B7NF22</accession>
<evidence type="ECO:0000255" key="1">
    <source>
        <dbReference type="HAMAP-Rule" id="MF_00386"/>
    </source>
</evidence>
<reference key="1">
    <citation type="journal article" date="2009" name="PLoS Genet.">
        <title>Organised genome dynamics in the Escherichia coli species results in highly diverse adaptive paths.</title>
        <authorList>
            <person name="Touchon M."/>
            <person name="Hoede C."/>
            <person name="Tenaillon O."/>
            <person name="Barbe V."/>
            <person name="Baeriswyl S."/>
            <person name="Bidet P."/>
            <person name="Bingen E."/>
            <person name="Bonacorsi S."/>
            <person name="Bouchier C."/>
            <person name="Bouvet O."/>
            <person name="Calteau A."/>
            <person name="Chiapello H."/>
            <person name="Clermont O."/>
            <person name="Cruveiller S."/>
            <person name="Danchin A."/>
            <person name="Diard M."/>
            <person name="Dossat C."/>
            <person name="Karoui M.E."/>
            <person name="Frapy E."/>
            <person name="Garry L."/>
            <person name="Ghigo J.M."/>
            <person name="Gilles A.M."/>
            <person name="Johnson J."/>
            <person name="Le Bouguenec C."/>
            <person name="Lescat M."/>
            <person name="Mangenot S."/>
            <person name="Martinez-Jehanne V."/>
            <person name="Matic I."/>
            <person name="Nassif X."/>
            <person name="Oztas S."/>
            <person name="Petit M.A."/>
            <person name="Pichon C."/>
            <person name="Rouy Z."/>
            <person name="Ruf C.S."/>
            <person name="Schneider D."/>
            <person name="Tourret J."/>
            <person name="Vacherie B."/>
            <person name="Vallenet D."/>
            <person name="Medigue C."/>
            <person name="Rocha E.P.C."/>
            <person name="Denamur E."/>
        </authorList>
    </citation>
    <scope>NUCLEOTIDE SEQUENCE [LARGE SCALE GENOMIC DNA]</scope>
    <source>
        <strain>UMN026 / ExPEC</strain>
    </source>
</reference>
<organism>
    <name type="scientific">Escherichia coli O17:K52:H18 (strain UMN026 / ExPEC)</name>
    <dbReference type="NCBI Taxonomy" id="585056"/>
    <lineage>
        <taxon>Bacteria</taxon>
        <taxon>Pseudomonadati</taxon>
        <taxon>Pseudomonadota</taxon>
        <taxon>Gammaproteobacteria</taxon>
        <taxon>Enterobacterales</taxon>
        <taxon>Enterobacteriaceae</taxon>
        <taxon>Escherichia</taxon>
    </lineage>
</organism>
<feature type="chain" id="PRO_1000122641" description="Putative membrane protein insertion efficiency factor">
    <location>
        <begin position="1"/>
        <end position="85"/>
    </location>
</feature>
<gene>
    <name evidence="1" type="primary">yidD</name>
    <name type="ordered locus">ECUMN_4236</name>
</gene>
<dbReference type="EMBL" id="CU928163">
    <property type="protein sequence ID" value="CAR15376.1"/>
    <property type="molecule type" value="Genomic_DNA"/>
</dbReference>
<dbReference type="RefSeq" id="WP_001307474.1">
    <property type="nucleotide sequence ID" value="NC_011751.1"/>
</dbReference>
<dbReference type="RefSeq" id="YP_002414870.1">
    <property type="nucleotide sequence ID" value="NC_011751.1"/>
</dbReference>
<dbReference type="STRING" id="585056.ECUMN_4236"/>
<dbReference type="GeneID" id="97443257"/>
<dbReference type="KEGG" id="eum:ECUMN_4236"/>
<dbReference type="HOGENOM" id="CLU_144811_5_2_6"/>
<dbReference type="Proteomes" id="UP000007097">
    <property type="component" value="Chromosome"/>
</dbReference>
<dbReference type="GO" id="GO:0005886">
    <property type="term" value="C:plasma membrane"/>
    <property type="evidence" value="ECO:0007669"/>
    <property type="project" value="UniProtKB-SubCell"/>
</dbReference>
<dbReference type="HAMAP" id="MF_00386">
    <property type="entry name" value="UPF0161_YidD"/>
    <property type="match status" value="1"/>
</dbReference>
<dbReference type="InterPro" id="IPR002696">
    <property type="entry name" value="Membr_insert_effic_factor_YidD"/>
</dbReference>
<dbReference type="NCBIfam" id="TIGR00278">
    <property type="entry name" value="membrane protein insertion efficiency factor YidD"/>
    <property type="match status" value="1"/>
</dbReference>
<dbReference type="PANTHER" id="PTHR33383">
    <property type="entry name" value="MEMBRANE PROTEIN INSERTION EFFICIENCY FACTOR-RELATED"/>
    <property type="match status" value="1"/>
</dbReference>
<dbReference type="PANTHER" id="PTHR33383:SF1">
    <property type="entry name" value="MEMBRANE PROTEIN INSERTION EFFICIENCY FACTOR-RELATED"/>
    <property type="match status" value="1"/>
</dbReference>
<dbReference type="Pfam" id="PF01809">
    <property type="entry name" value="YidD"/>
    <property type="match status" value="1"/>
</dbReference>
<dbReference type="SMART" id="SM01234">
    <property type="entry name" value="Haemolytic"/>
    <property type="match status" value="1"/>
</dbReference>